<comment type="function">
    <text evidence="1 3">Modulates chromatin structure and DNA damage response by regulating key determinants of chromatin compaction and DNA damage response. Binds H3K4me3-containing chromatin and promotes DNA condensation by recruiting corepressors such as TRIM28 and H3K9 methyltransferase SETDB1. Required for normal chromosome condensation during the early stages of mitosis. Required for normal chromosome separation during mitosis. Increases both chromatin-associated levels and activity of H3K9 methyltransferases, such as SETDB1, thus enhancing H3K9 trimethylation (By similarity). Essential for testicular stem-cell differentiation and sustained spermatogenesis (PubMed:21852425).</text>
</comment>
<comment type="subunit">
    <text evidence="1">Interacts with histone H3 that is trimethylated at 'Lys-4' (H3K4me3). Interacts with GSK3B. Interacts with TRIM28. Interacts with SETDB1; the interaction probably enhances SETDB1 chromatin-associated levels and activity.</text>
</comment>
<comment type="subcellular location">
    <subcellularLocation>
        <location evidence="1">Nucleus</location>
    </subcellularLocation>
    <subcellularLocation>
        <location evidence="1">Nucleus</location>
        <location evidence="1">Nucleoplasm</location>
    </subcellularLocation>
    <text evidence="1">Predominantly bound to chromatin, but a minor proportion is also detected in the nucleoplasm.</text>
</comment>
<comment type="PTM">
    <text evidence="1">Subject to proteasomal degradation. Stable when bound to chromatin. The soluble form is rapidly degraded.</text>
</comment>
<comment type="disruption phenotype">
    <text evidence="3">Knockout mice are indistinguishable from wild-type littermates on the basis of appearance and breeding capacity. They have smaller testes and a reduced number of germ cells. Postpubertal homozygous mutant animals display a pronounced progressive loss of germ cells from an initially normal germ epithelium of the testis tubules leading to testis hypoplasia and early infertility.</text>
</comment>
<organism>
    <name type="scientific">Mus musculus</name>
    <name type="common">Mouse</name>
    <dbReference type="NCBI Taxonomy" id="10090"/>
    <lineage>
        <taxon>Eukaryota</taxon>
        <taxon>Metazoa</taxon>
        <taxon>Chordata</taxon>
        <taxon>Craniata</taxon>
        <taxon>Vertebrata</taxon>
        <taxon>Euteleostomi</taxon>
        <taxon>Mammalia</taxon>
        <taxon>Eutheria</taxon>
        <taxon>Euarchontoglires</taxon>
        <taxon>Glires</taxon>
        <taxon>Rodentia</taxon>
        <taxon>Myomorpha</taxon>
        <taxon>Muroidea</taxon>
        <taxon>Muridae</taxon>
        <taxon>Murinae</taxon>
        <taxon>Mus</taxon>
        <taxon>Mus</taxon>
    </lineage>
</organism>
<reference key="1">
    <citation type="journal article" date="2004" name="Genome Res.">
        <title>The status, quality, and expansion of the NIH full-length cDNA project: the Mammalian Gene Collection (MGC).</title>
        <authorList>
            <consortium name="The MGC Project Team"/>
        </authorList>
    </citation>
    <scope>NUCLEOTIDE SEQUENCE [LARGE SCALE MRNA]</scope>
    <source>
        <strain>FVB/N</strain>
        <tissue>Mammary gland</tissue>
    </source>
</reference>
<reference key="2">
    <citation type="journal article" date="2011" name="J. Cell Sci.">
        <title>SPOC1 (PHF13) is required for spermatogonial stem cell differentiation and sustained spermatogenesis.</title>
        <authorList>
            <person name="Boerdlein A."/>
            <person name="Scherthan H."/>
            <person name="Nelkenbrecher C."/>
            <person name="Molter T."/>
            <person name="Boesl M.R."/>
            <person name="Dippold C."/>
            <person name="Birke K."/>
            <person name="Kinkley S."/>
            <person name="Staege H."/>
            <person name="Will H."/>
            <person name="Winterpacht A."/>
        </authorList>
    </citation>
    <scope>FUNCTION</scope>
    <scope>DISRUPTION PHENOTYPE</scope>
</reference>
<dbReference type="EMBL" id="BC029632">
    <property type="protein sequence ID" value="AAH29632.2"/>
    <property type="molecule type" value="mRNA"/>
</dbReference>
<dbReference type="EMBL" id="BC059282">
    <property type="protein sequence ID" value="AAH59282.1"/>
    <property type="molecule type" value="mRNA"/>
</dbReference>
<dbReference type="CCDS" id="CCDS51388.1"/>
<dbReference type="RefSeq" id="NP_766293.2">
    <property type="nucleotide sequence ID" value="NM_172705.2"/>
</dbReference>
<dbReference type="SMR" id="Q8K2W6"/>
<dbReference type="BioGRID" id="231058">
    <property type="interactions" value="1"/>
</dbReference>
<dbReference type="FunCoup" id="Q8K2W6">
    <property type="interactions" value="2448"/>
</dbReference>
<dbReference type="STRING" id="10090.ENSMUSP00000062590"/>
<dbReference type="iPTMnet" id="Q8K2W6"/>
<dbReference type="PhosphoSitePlus" id="Q8K2W6"/>
<dbReference type="PaxDb" id="10090-ENSMUSP00000062590"/>
<dbReference type="ProteomicsDB" id="289493"/>
<dbReference type="Antibodypedia" id="13124">
    <property type="antibodies" value="135 antibodies from 19 providers"/>
</dbReference>
<dbReference type="Ensembl" id="ENSMUST00000055688.10">
    <property type="protein sequence ID" value="ENSMUSP00000062590.10"/>
    <property type="gene ID" value="ENSMUSG00000047777.10"/>
</dbReference>
<dbReference type="GeneID" id="230936"/>
<dbReference type="KEGG" id="mmu:230936"/>
<dbReference type="UCSC" id="uc008vyx.2">
    <property type="organism name" value="mouse"/>
</dbReference>
<dbReference type="AGR" id="MGI:2446217"/>
<dbReference type="CTD" id="148479"/>
<dbReference type="MGI" id="MGI:2446217">
    <property type="gene designation" value="Phf13"/>
</dbReference>
<dbReference type="VEuPathDB" id="HostDB:ENSMUSG00000047777"/>
<dbReference type="eggNOG" id="KOG1844">
    <property type="taxonomic scope" value="Eukaryota"/>
</dbReference>
<dbReference type="GeneTree" id="ENSGT00530000063882"/>
<dbReference type="HOGENOM" id="CLU_047981_0_0_1"/>
<dbReference type="InParanoid" id="Q8K2W6"/>
<dbReference type="OMA" id="IPLHPQC"/>
<dbReference type="OrthoDB" id="79252at2759"/>
<dbReference type="PhylomeDB" id="Q8K2W6"/>
<dbReference type="TreeFam" id="TF331373"/>
<dbReference type="BioGRID-ORCS" id="230936">
    <property type="hits" value="3 hits in 80 CRISPR screens"/>
</dbReference>
<dbReference type="ChiTaRS" id="Phf13">
    <property type="organism name" value="mouse"/>
</dbReference>
<dbReference type="PRO" id="PR:Q8K2W6"/>
<dbReference type="Proteomes" id="UP000000589">
    <property type="component" value="Chromosome 4"/>
</dbReference>
<dbReference type="RNAct" id="Q8K2W6">
    <property type="molecule type" value="protein"/>
</dbReference>
<dbReference type="Bgee" id="ENSMUSG00000047777">
    <property type="expression patterns" value="Expressed in secondary oocyte and 252 other cell types or tissues"/>
</dbReference>
<dbReference type="ExpressionAtlas" id="Q8K2W6">
    <property type="expression patterns" value="baseline and differential"/>
</dbReference>
<dbReference type="GO" id="GO:0005654">
    <property type="term" value="C:nucleoplasm"/>
    <property type="evidence" value="ECO:0007669"/>
    <property type="project" value="UniProtKB-SubCell"/>
</dbReference>
<dbReference type="GO" id="GO:0005634">
    <property type="term" value="C:nucleus"/>
    <property type="evidence" value="ECO:0000250"/>
    <property type="project" value="UniProtKB"/>
</dbReference>
<dbReference type="GO" id="GO:0003682">
    <property type="term" value="F:chromatin binding"/>
    <property type="evidence" value="ECO:0000250"/>
    <property type="project" value="UniProtKB"/>
</dbReference>
<dbReference type="GO" id="GO:0140463">
    <property type="term" value="F:chromatin-protein adaptor activity"/>
    <property type="evidence" value="ECO:0000250"/>
    <property type="project" value="UniProtKB"/>
</dbReference>
<dbReference type="GO" id="GO:0062072">
    <property type="term" value="F:histone H3K9me2/3 reader activity"/>
    <property type="evidence" value="ECO:0000250"/>
    <property type="project" value="UniProtKB"/>
</dbReference>
<dbReference type="GO" id="GO:0008270">
    <property type="term" value="F:zinc ion binding"/>
    <property type="evidence" value="ECO:0007669"/>
    <property type="project" value="UniProtKB-KW"/>
</dbReference>
<dbReference type="GO" id="GO:0051301">
    <property type="term" value="P:cell division"/>
    <property type="evidence" value="ECO:0007669"/>
    <property type="project" value="UniProtKB-KW"/>
</dbReference>
<dbReference type="GO" id="GO:0007059">
    <property type="term" value="P:chromosome segregation"/>
    <property type="evidence" value="ECO:0000250"/>
    <property type="project" value="UniProtKB"/>
</dbReference>
<dbReference type="GO" id="GO:0006974">
    <property type="term" value="P:DNA damage response"/>
    <property type="evidence" value="ECO:0000250"/>
    <property type="project" value="UniProtKB"/>
</dbReference>
<dbReference type="GO" id="GO:0000278">
    <property type="term" value="P:mitotic cell cycle"/>
    <property type="evidence" value="ECO:0000250"/>
    <property type="project" value="UniProtKB"/>
</dbReference>
<dbReference type="GO" id="GO:0007076">
    <property type="term" value="P:mitotic chromosome condensation"/>
    <property type="evidence" value="ECO:0000250"/>
    <property type="project" value="UniProtKB"/>
</dbReference>
<dbReference type="CDD" id="cd15632">
    <property type="entry name" value="PHD_PHF13"/>
    <property type="match status" value="1"/>
</dbReference>
<dbReference type="FunFam" id="3.30.40.10:FF:000039">
    <property type="entry name" value="PHD finger protein 13"/>
    <property type="match status" value="1"/>
</dbReference>
<dbReference type="Gene3D" id="3.30.40.10">
    <property type="entry name" value="Zinc/RING finger domain, C3HC4 (zinc finger)"/>
    <property type="match status" value="1"/>
</dbReference>
<dbReference type="InterPro" id="IPR041947">
    <property type="entry name" value="PHD_PHF13"/>
</dbReference>
<dbReference type="InterPro" id="IPR011011">
    <property type="entry name" value="Znf_FYVE_PHD"/>
</dbReference>
<dbReference type="InterPro" id="IPR001965">
    <property type="entry name" value="Znf_PHD"/>
</dbReference>
<dbReference type="InterPro" id="IPR013083">
    <property type="entry name" value="Znf_RING/FYVE/PHD"/>
</dbReference>
<dbReference type="PANTHER" id="PTHR14571">
    <property type="entry name" value="HISTONE-LYSINE N-METHYLTRANSFERASE SET-26-RELATED"/>
    <property type="match status" value="1"/>
</dbReference>
<dbReference type="PANTHER" id="PTHR14571:SF13">
    <property type="entry name" value="PHD FINGER PROTEIN 13"/>
    <property type="match status" value="1"/>
</dbReference>
<dbReference type="Pfam" id="PF20826">
    <property type="entry name" value="PHD_5"/>
    <property type="match status" value="1"/>
</dbReference>
<dbReference type="SMART" id="SM00249">
    <property type="entry name" value="PHD"/>
    <property type="match status" value="1"/>
</dbReference>
<dbReference type="SUPFAM" id="SSF57903">
    <property type="entry name" value="FYVE/PHD zinc finger"/>
    <property type="match status" value="1"/>
</dbReference>
<sequence>MDSDSCAAAFHPEEYSPTCKRRRTVEDFNKFCTFVLAYAGYIPYPKEELPLRSSPSPANSTAGTIDSDGWDTGFSDITPSVPDRCFSHLQPSLLQRAKPSNYLLDRKTTDKLKKKKRRKRRDSDIPVKEGFRESLLKLEAADPYVETPSSPTMQDIPQASADPCSGWDSDTPSSGSCATVSPDQVTEIKTEGKRTIVRQGKQVVFRDEDSTGNDEDIMVDSDDDSWDLVTCFCMKPFAGRPMIECNECHTWIHLSCAKIRKSNVPEVFVCQKCRDSKFDIRRSNRSRMGSRKLFLD</sequence>
<protein>
    <recommendedName>
        <fullName>PHD finger protein 13</fullName>
    </recommendedName>
</protein>
<evidence type="ECO:0000250" key="1">
    <source>
        <dbReference type="UniProtKB" id="Q86YI8"/>
    </source>
</evidence>
<evidence type="ECO:0000256" key="2">
    <source>
        <dbReference type="SAM" id="MobiDB-lite"/>
    </source>
</evidence>
<evidence type="ECO:0000269" key="3">
    <source>
    </source>
</evidence>
<feature type="chain" id="PRO_0000059305" description="PHD finger protein 13">
    <location>
        <begin position="1"/>
        <end position="296"/>
    </location>
</feature>
<feature type="zinc finger region" description="PHD-type">
    <location>
        <begin position="230"/>
        <end position="276"/>
    </location>
</feature>
<feature type="region of interest" description="Disordered" evidence="2">
    <location>
        <begin position="51"/>
        <end position="73"/>
    </location>
</feature>
<feature type="region of interest" description="Disordered" evidence="2">
    <location>
        <begin position="97"/>
        <end position="126"/>
    </location>
</feature>
<feature type="region of interest" description="Disordered" evidence="2">
    <location>
        <begin position="145"/>
        <end position="183"/>
    </location>
</feature>
<feature type="region of interest" description="Interaction with trimethylated histone H3 (H3K4)" evidence="1">
    <location>
        <begin position="237"/>
        <end position="244"/>
    </location>
</feature>
<feature type="short sequence motif" description="Nuclear localization signal" evidence="1">
    <location>
        <begin position="106"/>
        <end position="123"/>
    </location>
</feature>
<feature type="compositionally biased region" description="Polar residues" evidence="2">
    <location>
        <begin position="53"/>
        <end position="64"/>
    </location>
</feature>
<feature type="compositionally biased region" description="Polar residues" evidence="2">
    <location>
        <begin position="147"/>
        <end position="157"/>
    </location>
</feature>
<feature type="compositionally biased region" description="Polar residues" evidence="2">
    <location>
        <begin position="168"/>
        <end position="183"/>
    </location>
</feature>
<keyword id="KW-0131">Cell cycle</keyword>
<keyword id="KW-0132">Cell division</keyword>
<keyword id="KW-0156">Chromatin regulator</keyword>
<keyword id="KW-0226">DNA condensation</keyword>
<keyword id="KW-0479">Metal-binding</keyword>
<keyword id="KW-0498">Mitosis</keyword>
<keyword id="KW-0539">Nucleus</keyword>
<keyword id="KW-1185">Reference proteome</keyword>
<keyword id="KW-0862">Zinc</keyword>
<keyword id="KW-0863">Zinc-finger</keyword>
<gene>
    <name type="primary">Phf13</name>
</gene>
<proteinExistence type="evidence at transcript level"/>
<accession>Q8K2W6</accession>
<name>PHF13_MOUSE</name>